<dbReference type="EC" id="4.2.3.111" evidence="7"/>
<dbReference type="EC" id="4.2.3.108" evidence="7"/>
<dbReference type="EC" id="4.2.3.15" evidence="7"/>
<dbReference type="EC" id="4.2.3.-" evidence="7"/>
<dbReference type="EMBL" id="JQ346173">
    <property type="protein sequence ID" value="AFB82540.1"/>
    <property type="molecule type" value="mRNA"/>
</dbReference>
<dbReference type="SMR" id="H6WZF2"/>
<dbReference type="BRENDA" id="4.2.3.108">
    <property type="organism ID" value="7435"/>
</dbReference>
<dbReference type="UniPathway" id="UPA00213"/>
<dbReference type="GO" id="GO:0009507">
    <property type="term" value="C:chloroplast"/>
    <property type="evidence" value="ECO:0007669"/>
    <property type="project" value="UniProtKB-SubCell"/>
</dbReference>
<dbReference type="GO" id="GO:0102313">
    <property type="term" value="F:1,8-cineole synthase activity"/>
    <property type="evidence" value="ECO:0000314"/>
    <property type="project" value="UniProtKB"/>
</dbReference>
<dbReference type="GO" id="GO:0000287">
    <property type="term" value="F:magnesium ion binding"/>
    <property type="evidence" value="ECO:0007669"/>
    <property type="project" value="InterPro"/>
</dbReference>
<dbReference type="GO" id="GO:0050551">
    <property type="term" value="F:myrcene synthase activity"/>
    <property type="evidence" value="ECO:0000314"/>
    <property type="project" value="UniProtKB"/>
</dbReference>
<dbReference type="GO" id="GO:0080015">
    <property type="term" value="F:sabinene synthase activity"/>
    <property type="evidence" value="ECO:0000314"/>
    <property type="project" value="UniProtKB"/>
</dbReference>
<dbReference type="GO" id="GO:0007623">
    <property type="term" value="P:circadian rhythm"/>
    <property type="evidence" value="ECO:0000270"/>
    <property type="project" value="UniProtKB"/>
</dbReference>
<dbReference type="GO" id="GO:0016102">
    <property type="term" value="P:diterpenoid biosynthetic process"/>
    <property type="evidence" value="ECO:0007669"/>
    <property type="project" value="InterPro"/>
</dbReference>
<dbReference type="GO" id="GO:0010597">
    <property type="term" value="P:green leaf volatile biosynthetic process"/>
    <property type="evidence" value="ECO:0000314"/>
    <property type="project" value="UniProtKB"/>
</dbReference>
<dbReference type="GO" id="GO:0046250">
    <property type="term" value="P:limonene biosynthetic process"/>
    <property type="evidence" value="ECO:0000314"/>
    <property type="project" value="UniProtKB"/>
</dbReference>
<dbReference type="GO" id="GO:0016114">
    <property type="term" value="P:terpenoid biosynthetic process"/>
    <property type="evidence" value="ECO:0000314"/>
    <property type="project" value="UniProtKB"/>
</dbReference>
<dbReference type="CDD" id="cd00684">
    <property type="entry name" value="Terpene_cyclase_plant_C1"/>
    <property type="match status" value="1"/>
</dbReference>
<dbReference type="FunFam" id="1.10.600.10:FF:000007">
    <property type="entry name" value="Isoprene synthase, chloroplastic"/>
    <property type="match status" value="1"/>
</dbReference>
<dbReference type="Gene3D" id="1.10.600.10">
    <property type="entry name" value="Farnesyl Diphosphate Synthase"/>
    <property type="match status" value="1"/>
</dbReference>
<dbReference type="Gene3D" id="1.50.10.130">
    <property type="entry name" value="Terpene synthase, N-terminal domain"/>
    <property type="match status" value="1"/>
</dbReference>
<dbReference type="InterPro" id="IPR008949">
    <property type="entry name" value="Isoprenoid_synthase_dom_sf"/>
</dbReference>
<dbReference type="InterPro" id="IPR034741">
    <property type="entry name" value="Terpene_cyclase-like_1_C"/>
</dbReference>
<dbReference type="InterPro" id="IPR044814">
    <property type="entry name" value="Terpene_cyclase_plant_C1"/>
</dbReference>
<dbReference type="InterPro" id="IPR001906">
    <property type="entry name" value="Terpene_synth_N"/>
</dbReference>
<dbReference type="InterPro" id="IPR036965">
    <property type="entry name" value="Terpene_synth_N_sf"/>
</dbReference>
<dbReference type="InterPro" id="IPR050148">
    <property type="entry name" value="Terpene_synthase-like"/>
</dbReference>
<dbReference type="InterPro" id="IPR005630">
    <property type="entry name" value="Terpene_synthase_metal-bd"/>
</dbReference>
<dbReference type="InterPro" id="IPR008930">
    <property type="entry name" value="Terpenoid_cyclase/PrenylTrfase"/>
</dbReference>
<dbReference type="PANTHER" id="PTHR31225">
    <property type="entry name" value="OS04G0344100 PROTEIN-RELATED"/>
    <property type="match status" value="1"/>
</dbReference>
<dbReference type="PANTHER" id="PTHR31225:SF9">
    <property type="entry name" value="TERPENE SYNTHASE 10"/>
    <property type="match status" value="1"/>
</dbReference>
<dbReference type="Pfam" id="PF01397">
    <property type="entry name" value="Terpene_synth"/>
    <property type="match status" value="1"/>
</dbReference>
<dbReference type="Pfam" id="PF03936">
    <property type="entry name" value="Terpene_synth_C"/>
    <property type="match status" value="1"/>
</dbReference>
<dbReference type="SFLD" id="SFLDS00005">
    <property type="entry name" value="Isoprenoid_Synthase_Type_I"/>
    <property type="match status" value="1"/>
</dbReference>
<dbReference type="SFLD" id="SFLDG01019">
    <property type="entry name" value="Terpene_Cyclase_Like_1_C_Termi"/>
    <property type="match status" value="1"/>
</dbReference>
<dbReference type="SUPFAM" id="SSF48239">
    <property type="entry name" value="Terpenoid cyclases/Protein prenyltransferases"/>
    <property type="match status" value="1"/>
</dbReference>
<dbReference type="SUPFAM" id="SSF48576">
    <property type="entry name" value="Terpenoid synthases"/>
    <property type="match status" value="1"/>
</dbReference>
<organism>
    <name type="scientific">Nicotiana alata</name>
    <name type="common">Winged tobacco</name>
    <name type="synonym">Persian tobacco</name>
    <dbReference type="NCBI Taxonomy" id="4087"/>
    <lineage>
        <taxon>Eukaryota</taxon>
        <taxon>Viridiplantae</taxon>
        <taxon>Streptophyta</taxon>
        <taxon>Embryophyta</taxon>
        <taxon>Tracheophyta</taxon>
        <taxon>Spermatophyta</taxon>
        <taxon>Magnoliopsida</taxon>
        <taxon>eudicotyledons</taxon>
        <taxon>Gunneridae</taxon>
        <taxon>Pentapetalae</taxon>
        <taxon>asterids</taxon>
        <taxon>lamiids</taxon>
        <taxon>Solanales</taxon>
        <taxon>Solanaceae</taxon>
        <taxon>Nicotianoideae</taxon>
        <taxon>Nicotianeae</taxon>
        <taxon>Nicotiana</taxon>
    </lineage>
</organism>
<protein>
    <recommendedName>
        <fullName evidence="8">Terpineol synthase, chloroplastic</fullName>
        <ecNumber evidence="7">4.2.3.111</ecNumber>
    </recommendedName>
    <alternativeName>
        <fullName evidence="8">1,8-cineol synthase, chloroplastic</fullName>
        <ecNumber evidence="7">4.2.3.108</ecNumber>
    </alternativeName>
    <alternativeName>
        <fullName evidence="8">Beta-myrcene synthase</fullName>
        <ecNumber evidence="7">4.2.3.15</ecNumber>
    </alternativeName>
    <alternativeName>
        <fullName evidence="8">Limonene synthase</fullName>
        <ecNumber evidence="7">4.2.3.-</ecNumber>
    </alternativeName>
    <alternativeName>
        <fullName evidence="8">Sabinene synthase</fullName>
        <ecNumber evidence="7">4.2.3.-</ecNumber>
    </alternativeName>
</protein>
<gene>
    <name evidence="8" type="primary">TER</name>
</gene>
<comment type="function">
    <text evidence="7">Monoterpene synthase (TPS) involved in the biosynthesis of monoterpene natural products of the 'cineole cassette', volatile compounds present in floral scent (PubMed:21527560). Catalyzes the conversion of (2E)-geranyl diphosphate (GPP) into alpha-terpineol and, as minor products, sabinene, beta-myrcene, limonene and 1,8-cineole (PubMed:21527560).</text>
</comment>
<comment type="catalytic activity">
    <reaction evidence="7">
        <text>(2E)-geranyl diphosphate + H2O = (S)-alpha-terpineol + diphosphate</text>
        <dbReference type="Rhea" id="RHEA:32551"/>
        <dbReference type="ChEBI" id="CHEBI:128"/>
        <dbReference type="ChEBI" id="CHEBI:15377"/>
        <dbReference type="ChEBI" id="CHEBI:33019"/>
        <dbReference type="ChEBI" id="CHEBI:58057"/>
        <dbReference type="EC" id="4.2.3.111"/>
    </reaction>
    <physiologicalReaction direction="left-to-right" evidence="7">
        <dbReference type="Rhea" id="RHEA:32552"/>
    </physiologicalReaction>
</comment>
<comment type="catalytic activity">
    <reaction evidence="7">
        <text>(2E)-geranyl diphosphate = sabinene + diphosphate</text>
        <dbReference type="Rhea" id="RHEA:68636"/>
        <dbReference type="ChEBI" id="CHEBI:33019"/>
        <dbReference type="ChEBI" id="CHEBI:50027"/>
        <dbReference type="ChEBI" id="CHEBI:58057"/>
    </reaction>
    <physiologicalReaction direction="left-to-right" evidence="7">
        <dbReference type="Rhea" id="RHEA:68637"/>
    </physiologicalReaction>
</comment>
<comment type="catalytic activity">
    <reaction evidence="7">
        <text>(2E)-geranyl diphosphate = beta-myrcene + diphosphate</text>
        <dbReference type="Rhea" id="RHEA:16965"/>
        <dbReference type="ChEBI" id="CHEBI:17221"/>
        <dbReference type="ChEBI" id="CHEBI:33019"/>
        <dbReference type="ChEBI" id="CHEBI:58057"/>
        <dbReference type="EC" id="4.2.3.15"/>
    </reaction>
    <physiologicalReaction direction="left-to-right" evidence="7">
        <dbReference type="Rhea" id="RHEA:16966"/>
    </physiologicalReaction>
</comment>
<comment type="catalytic activity">
    <reaction evidence="7">
        <text>(2E)-geranyl diphosphate = limonene + diphosphate</text>
        <dbReference type="Rhea" id="RHEA:68640"/>
        <dbReference type="ChEBI" id="CHEBI:15384"/>
        <dbReference type="ChEBI" id="CHEBI:33019"/>
        <dbReference type="ChEBI" id="CHEBI:58057"/>
    </reaction>
    <physiologicalReaction direction="left-to-right" evidence="7">
        <dbReference type="Rhea" id="RHEA:68641"/>
    </physiologicalReaction>
</comment>
<comment type="catalytic activity">
    <reaction evidence="7">
        <text>(2E)-geranyl diphosphate + H2O = 1,8-cineole + diphosphate</text>
        <dbReference type="Rhea" id="RHEA:32543"/>
        <dbReference type="ChEBI" id="CHEBI:15377"/>
        <dbReference type="ChEBI" id="CHEBI:27961"/>
        <dbReference type="ChEBI" id="CHEBI:33019"/>
        <dbReference type="ChEBI" id="CHEBI:58057"/>
        <dbReference type="EC" id="4.2.3.108"/>
    </reaction>
    <physiologicalReaction direction="left-to-right" evidence="7">
        <dbReference type="Rhea" id="RHEA:32544"/>
    </physiologicalReaction>
</comment>
<comment type="cofactor">
    <cofactor evidence="1">
        <name>Mg(2+)</name>
        <dbReference type="ChEBI" id="CHEBI:18420"/>
    </cofactor>
    <cofactor evidence="1">
        <name>Mn(2+)</name>
        <dbReference type="ChEBI" id="CHEBI:29035"/>
    </cofactor>
    <text evidence="1">Binds 3 Mg(2+) or Mn(2+) ions per subunit.</text>
</comment>
<comment type="pathway">
    <text evidence="7">Secondary metabolite biosynthesis; terpenoid biosynthesis.</text>
</comment>
<comment type="subunit">
    <text evidence="4">Monomer.</text>
</comment>
<comment type="subcellular location">
    <subcellularLocation>
        <location evidence="5">Plastid</location>
        <location evidence="5">Chloroplast</location>
    </subcellularLocation>
</comment>
<comment type="tissue specificity">
    <text evidence="7">Confined to flowers.</text>
</comment>
<comment type="developmental stage">
    <text evidence="7">In flowers, present in pistils and in the adaxial and abaxial epidermis of the petals (PubMed:21527560). Maximal enzyme activities are reached at the second day after anthesis when flowers are fully opened (PubMed:21527560).</text>
</comment>
<comment type="induction">
    <text evidence="7">Enzyme activity levels follow a circadian oscillation, reaching a maxima at the transition from day to night (diurnal rhythm).</text>
</comment>
<comment type="domain">
    <text evidence="9">The Asp-Asp-Xaa-Xaa-Asp/Glu (DDXXD/E) motif is important for the catalytic activity, presumably through binding to Mg(2+).</text>
</comment>
<comment type="similarity">
    <text evidence="9">Belongs to the terpene synthase family. Tpsb subfamily.</text>
</comment>
<feature type="transit peptide" description="Chloroplast" evidence="5">
    <location>
        <begin position="1"/>
        <end status="unknown"/>
    </location>
</feature>
<feature type="chain" id="PRO_0000455076" description="Terpineol synthase, chloroplastic">
    <location>
        <begin status="unknown"/>
        <end position="543"/>
    </location>
</feature>
<feature type="region of interest" description="Disordered" evidence="6">
    <location>
        <begin position="1"/>
        <end position="22"/>
    </location>
</feature>
<feature type="short sequence motif" description="DDXXD motif" evidence="2">
    <location>
        <begin position="300"/>
        <end position="304"/>
    </location>
</feature>
<feature type="binding site" evidence="3">
    <location>
        <position position="263"/>
    </location>
    <ligand>
        <name>(2E)-geranyl diphosphate</name>
        <dbReference type="ChEBI" id="CHEBI:58057"/>
    </ligand>
</feature>
<feature type="binding site" evidence="3">
    <location>
        <position position="300"/>
    </location>
    <ligand>
        <name>(2E)-geranyl diphosphate</name>
        <dbReference type="ChEBI" id="CHEBI:58057"/>
    </ligand>
</feature>
<feature type="binding site" evidence="3">
    <location>
        <position position="300"/>
    </location>
    <ligand>
        <name>Mg(2+)</name>
        <dbReference type="ChEBI" id="CHEBI:18420"/>
        <label>1</label>
    </ligand>
</feature>
<feature type="binding site" evidence="3">
    <location>
        <position position="300"/>
    </location>
    <ligand>
        <name>Mg(2+)</name>
        <dbReference type="ChEBI" id="CHEBI:18420"/>
        <label>2</label>
    </ligand>
</feature>
<feature type="binding site" evidence="3">
    <location>
        <position position="304"/>
    </location>
    <ligand>
        <name>(2E)-geranyl diphosphate</name>
        <dbReference type="ChEBI" id="CHEBI:58057"/>
    </ligand>
</feature>
<feature type="binding site" evidence="3">
    <location>
        <position position="304"/>
    </location>
    <ligand>
        <name>Mg(2+)</name>
        <dbReference type="ChEBI" id="CHEBI:18420"/>
        <label>1</label>
    </ligand>
</feature>
<feature type="binding site" evidence="3">
    <location>
        <position position="304"/>
    </location>
    <ligand>
        <name>Mg(2+)</name>
        <dbReference type="ChEBI" id="CHEBI:18420"/>
        <label>2</label>
    </ligand>
</feature>
<feature type="binding site" evidence="3">
    <location>
        <position position="435"/>
    </location>
    <ligand>
        <name>(2E)-geranyl diphosphate</name>
        <dbReference type="ChEBI" id="CHEBI:58057"/>
    </ligand>
</feature>
<feature type="binding site" evidence="3">
    <location>
        <position position="438"/>
    </location>
    <ligand>
        <name>(2E)-geranyl diphosphate</name>
        <dbReference type="ChEBI" id="CHEBI:58057"/>
    </ligand>
</feature>
<feature type="binding site" evidence="3">
    <location>
        <position position="438"/>
    </location>
    <ligand>
        <name>Mg(2+)</name>
        <dbReference type="ChEBI" id="CHEBI:18420"/>
        <label>3</label>
    </ligand>
</feature>
<feature type="binding site" evidence="3">
    <location>
        <position position="442"/>
    </location>
    <ligand>
        <name>Mg(2+)</name>
        <dbReference type="ChEBI" id="CHEBI:18420"/>
        <label>3</label>
    </ligand>
</feature>
<feature type="binding site" evidence="3">
    <location>
        <position position="446"/>
    </location>
    <ligand>
        <name>Mg(2+)</name>
        <dbReference type="ChEBI" id="CHEBI:18420"/>
        <label>3</label>
    </ligand>
</feature>
<evidence type="ECO:0000250" key="1">
    <source>
        <dbReference type="UniProtKB" id="A0A1C9J6A7"/>
    </source>
</evidence>
<evidence type="ECO:0000250" key="2">
    <source>
        <dbReference type="UniProtKB" id="H2ELN1"/>
    </source>
</evidence>
<evidence type="ECO:0000250" key="3">
    <source>
        <dbReference type="UniProtKB" id="Q40577"/>
    </source>
</evidence>
<evidence type="ECO:0000250" key="4">
    <source>
        <dbReference type="UniProtKB" id="Q6JD73"/>
    </source>
</evidence>
<evidence type="ECO:0000255" key="5"/>
<evidence type="ECO:0000256" key="6">
    <source>
        <dbReference type="SAM" id="MobiDB-lite"/>
    </source>
</evidence>
<evidence type="ECO:0000269" key="7">
    <source>
    </source>
</evidence>
<evidence type="ECO:0000303" key="8">
    <source>
    </source>
</evidence>
<evidence type="ECO:0000305" key="9"/>
<name>TER_NICAL</name>
<sequence length="543" mass="63682">MNTEPSPNHYSAISSSDQNLTRRSGNYQPTMWDFEYIQSIHNDYAGDKYMKRFNELKEEMKKMIMAEGSQELEKLELIDNLQRLGVSYHFKHEIMQILSSIKQHSTPADSLYATALKFRLLREHGFHISQEIFDGLSETHTKDTKGMLYLYEASFLATEGESELEQAWTEKHLREYLKNKNIDQNVAKLVHRALELPLHWRMLRLEARWFISFYKKRQDMIPLLLELAILDFNIVQAAHIQDLKYVARWWKETGLAENLPFARDRLVENFFWTIGVNFLPQYGYFRRIETKVNALVTTIDDVYDVFGTLDELQCFTDAIQRWNTDELDNLPDNMKMCYFALDDFINEVACDALIVPYLRNAWTDLCKSYLIEAKWYFSKYIPTMEEYMDNAWISISAPVILVHAYFLIANPVNKEALHYLRNYHDIIRWSALILRLANDLGTSSDELKRGDVPKSIQCYMNEKKVSEEEARQHIRLLISETWKKLNEAHNVAAHPFPKMFVKSAMNLARMAQCMYQHGDGHGGQNSETQNRIMALLFESIPPA</sequence>
<accession>H6WZF2</accession>
<reference key="1">
    <citation type="journal article" date="2011" name="Mol. Plant">
        <title>Product variability of the 'cineole cassette' monoterpene synthases of related Nicotiana species.</title>
        <authorList>
            <person name="Faehnrich A."/>
            <person name="Krause K."/>
            <person name="Piechulla B."/>
        </authorList>
    </citation>
    <scope>NUCLEOTIDE SEQUENCE [MRNA]</scope>
    <scope>FUNCTION</scope>
    <scope>CATALYTIC ACTIVITY</scope>
    <scope>PATHWAY</scope>
    <scope>TISSUE SPECIFICITY</scope>
    <scope>DEVELOPMENTAL STAGE</scope>
    <scope>INDUCTION</scope>
    <source>
        <strain>cv. TW 7</strain>
    </source>
</reference>
<proteinExistence type="evidence at protein level"/>
<keyword id="KW-0150">Chloroplast</keyword>
<keyword id="KW-0456">Lyase</keyword>
<keyword id="KW-0460">Magnesium</keyword>
<keyword id="KW-0479">Metal-binding</keyword>
<keyword id="KW-0934">Plastid</keyword>
<keyword id="KW-0809">Transit peptide</keyword>